<dbReference type="EC" id="2.4.2.-" evidence="1"/>
<dbReference type="EC" id="2.4.2.22" evidence="1"/>
<dbReference type="EMBL" id="CP000462">
    <property type="protein sequence ID" value="ABK36045.1"/>
    <property type="molecule type" value="Genomic_DNA"/>
</dbReference>
<dbReference type="RefSeq" id="WP_011707189.1">
    <property type="nucleotide sequence ID" value="NC_008570.1"/>
</dbReference>
<dbReference type="RefSeq" id="YP_857913.1">
    <property type="nucleotide sequence ID" value="NC_008570.1"/>
</dbReference>
<dbReference type="SMR" id="A0KNR2"/>
<dbReference type="STRING" id="380703.AHA_3424"/>
<dbReference type="EnsemblBacteria" id="ABK36045">
    <property type="protein sequence ID" value="ABK36045"/>
    <property type="gene ID" value="AHA_3424"/>
</dbReference>
<dbReference type="GeneID" id="4487150"/>
<dbReference type="KEGG" id="aha:AHA_3424"/>
<dbReference type="PATRIC" id="fig|380703.7.peg.3426"/>
<dbReference type="eggNOG" id="COG2236">
    <property type="taxonomic scope" value="Bacteria"/>
</dbReference>
<dbReference type="HOGENOM" id="CLU_080904_3_0_6"/>
<dbReference type="OrthoDB" id="9789690at2"/>
<dbReference type="UniPathway" id="UPA00602">
    <property type="reaction ID" value="UER00658"/>
</dbReference>
<dbReference type="UniPathway" id="UPA00909">
    <property type="reaction ID" value="UER00887"/>
</dbReference>
<dbReference type="Proteomes" id="UP000000756">
    <property type="component" value="Chromosome"/>
</dbReference>
<dbReference type="GO" id="GO:0005829">
    <property type="term" value="C:cytosol"/>
    <property type="evidence" value="ECO:0007669"/>
    <property type="project" value="TreeGrafter"/>
</dbReference>
<dbReference type="GO" id="GO:0005886">
    <property type="term" value="C:plasma membrane"/>
    <property type="evidence" value="ECO:0007669"/>
    <property type="project" value="UniProtKB-SubCell"/>
</dbReference>
<dbReference type="GO" id="GO:0052657">
    <property type="term" value="F:guanine phosphoribosyltransferase activity"/>
    <property type="evidence" value="ECO:0007669"/>
    <property type="project" value="RHEA"/>
</dbReference>
<dbReference type="GO" id="GO:0004422">
    <property type="term" value="F:hypoxanthine phosphoribosyltransferase activity"/>
    <property type="evidence" value="ECO:0007669"/>
    <property type="project" value="TreeGrafter"/>
</dbReference>
<dbReference type="GO" id="GO:0000287">
    <property type="term" value="F:magnesium ion binding"/>
    <property type="evidence" value="ECO:0007669"/>
    <property type="project" value="UniProtKB-UniRule"/>
</dbReference>
<dbReference type="GO" id="GO:0000310">
    <property type="term" value="F:xanthine phosphoribosyltransferase activity"/>
    <property type="evidence" value="ECO:0007669"/>
    <property type="project" value="UniProtKB-UniRule"/>
</dbReference>
<dbReference type="GO" id="GO:0032263">
    <property type="term" value="P:GMP salvage"/>
    <property type="evidence" value="ECO:0007669"/>
    <property type="project" value="UniProtKB-UniRule"/>
</dbReference>
<dbReference type="GO" id="GO:0032264">
    <property type="term" value="P:IMP salvage"/>
    <property type="evidence" value="ECO:0007669"/>
    <property type="project" value="TreeGrafter"/>
</dbReference>
<dbReference type="GO" id="GO:0006166">
    <property type="term" value="P:purine ribonucleoside salvage"/>
    <property type="evidence" value="ECO:0007669"/>
    <property type="project" value="UniProtKB-KW"/>
</dbReference>
<dbReference type="GO" id="GO:0032265">
    <property type="term" value="P:XMP salvage"/>
    <property type="evidence" value="ECO:0007669"/>
    <property type="project" value="UniProtKB-UniRule"/>
</dbReference>
<dbReference type="CDD" id="cd06223">
    <property type="entry name" value="PRTases_typeI"/>
    <property type="match status" value="1"/>
</dbReference>
<dbReference type="Gene3D" id="3.40.50.2020">
    <property type="match status" value="1"/>
</dbReference>
<dbReference type="HAMAP" id="MF_01903">
    <property type="entry name" value="XGPRT"/>
    <property type="match status" value="1"/>
</dbReference>
<dbReference type="InterPro" id="IPR000836">
    <property type="entry name" value="PRibTrfase_dom"/>
</dbReference>
<dbReference type="InterPro" id="IPR029057">
    <property type="entry name" value="PRTase-like"/>
</dbReference>
<dbReference type="InterPro" id="IPR023747">
    <property type="entry name" value="Xanthine_Guanine_PRibTrfase"/>
</dbReference>
<dbReference type="NCBIfam" id="NF006613">
    <property type="entry name" value="PRK09177.1"/>
    <property type="match status" value="1"/>
</dbReference>
<dbReference type="PANTHER" id="PTHR39563">
    <property type="entry name" value="XANTHINE PHOSPHORIBOSYLTRANSFERASE"/>
    <property type="match status" value="1"/>
</dbReference>
<dbReference type="PANTHER" id="PTHR39563:SF1">
    <property type="entry name" value="XANTHINE-GUANINE PHOSPHORIBOSYLTRANSFERASE"/>
    <property type="match status" value="1"/>
</dbReference>
<dbReference type="Pfam" id="PF00156">
    <property type="entry name" value="Pribosyltran"/>
    <property type="match status" value="1"/>
</dbReference>
<dbReference type="SUPFAM" id="SSF53271">
    <property type="entry name" value="PRTase-like"/>
    <property type="match status" value="1"/>
</dbReference>
<dbReference type="PROSITE" id="PS00103">
    <property type="entry name" value="PUR_PYR_PR_TRANSFER"/>
    <property type="match status" value="1"/>
</dbReference>
<reference key="1">
    <citation type="journal article" date="2006" name="J. Bacteriol.">
        <title>Genome sequence of Aeromonas hydrophila ATCC 7966T: jack of all trades.</title>
        <authorList>
            <person name="Seshadri R."/>
            <person name="Joseph S.W."/>
            <person name="Chopra A.K."/>
            <person name="Sha J."/>
            <person name="Shaw J."/>
            <person name="Graf J."/>
            <person name="Haft D.H."/>
            <person name="Wu M."/>
            <person name="Ren Q."/>
            <person name="Rosovitz M.J."/>
            <person name="Madupu R."/>
            <person name="Tallon L."/>
            <person name="Kim M."/>
            <person name="Jin S."/>
            <person name="Vuong H."/>
            <person name="Stine O.C."/>
            <person name="Ali A."/>
            <person name="Horneman A.J."/>
            <person name="Heidelberg J.F."/>
        </authorList>
    </citation>
    <scope>NUCLEOTIDE SEQUENCE [LARGE SCALE GENOMIC DNA]</scope>
    <source>
        <strain>ATCC 7966 / DSM 30187 / BCRC 13018 / CCUG 14551 / JCM 1027 / KCTC 2358 / NCIMB 9240 / NCTC 8049</strain>
    </source>
</reference>
<evidence type="ECO:0000255" key="1">
    <source>
        <dbReference type="HAMAP-Rule" id="MF_01903"/>
    </source>
</evidence>
<accession>A0KNR2</accession>
<comment type="function">
    <text evidence="1">Purine salvage pathway enzyme that catalyzes the transfer of the ribosyl-5-phosphate group from 5-phospho-alpha-D-ribose 1-diphosphate (PRPP) to the N9 position of the 6-oxopurines guanine and xanthine to form the corresponding ribonucleotides GMP (guanosine 5'-monophosphate) and XMP (xanthosine 5'-monophosphate), with the release of PPi. To a lesser extent, also acts on hypoxanthine.</text>
</comment>
<comment type="catalytic activity">
    <reaction evidence="1">
        <text>GMP + diphosphate = guanine + 5-phospho-alpha-D-ribose 1-diphosphate</text>
        <dbReference type="Rhea" id="RHEA:25424"/>
        <dbReference type="ChEBI" id="CHEBI:16235"/>
        <dbReference type="ChEBI" id="CHEBI:33019"/>
        <dbReference type="ChEBI" id="CHEBI:58017"/>
        <dbReference type="ChEBI" id="CHEBI:58115"/>
    </reaction>
    <physiologicalReaction direction="right-to-left" evidence="1">
        <dbReference type="Rhea" id="RHEA:25426"/>
    </physiologicalReaction>
</comment>
<comment type="catalytic activity">
    <reaction evidence="1">
        <text>XMP + diphosphate = xanthine + 5-phospho-alpha-D-ribose 1-diphosphate</text>
        <dbReference type="Rhea" id="RHEA:10800"/>
        <dbReference type="ChEBI" id="CHEBI:17712"/>
        <dbReference type="ChEBI" id="CHEBI:33019"/>
        <dbReference type="ChEBI" id="CHEBI:57464"/>
        <dbReference type="ChEBI" id="CHEBI:58017"/>
        <dbReference type="EC" id="2.4.2.22"/>
    </reaction>
    <physiologicalReaction direction="right-to-left" evidence="1">
        <dbReference type="Rhea" id="RHEA:10802"/>
    </physiologicalReaction>
</comment>
<comment type="catalytic activity">
    <reaction evidence="1">
        <text>IMP + diphosphate = hypoxanthine + 5-phospho-alpha-D-ribose 1-diphosphate</text>
        <dbReference type="Rhea" id="RHEA:17973"/>
        <dbReference type="ChEBI" id="CHEBI:17368"/>
        <dbReference type="ChEBI" id="CHEBI:33019"/>
        <dbReference type="ChEBI" id="CHEBI:58017"/>
        <dbReference type="ChEBI" id="CHEBI:58053"/>
    </reaction>
    <physiologicalReaction direction="right-to-left" evidence="1">
        <dbReference type="Rhea" id="RHEA:17975"/>
    </physiologicalReaction>
</comment>
<comment type="cofactor">
    <cofactor evidence="1">
        <name>Mg(2+)</name>
        <dbReference type="ChEBI" id="CHEBI:18420"/>
    </cofactor>
</comment>
<comment type="pathway">
    <text evidence="1">Purine metabolism; GMP biosynthesis via salvage pathway; GMP from guanine: step 1/1.</text>
</comment>
<comment type="pathway">
    <text evidence="1">Purine metabolism; XMP biosynthesis via salvage pathway; XMP from xanthine: step 1/1.</text>
</comment>
<comment type="subunit">
    <text evidence="1">Homotetramer.</text>
</comment>
<comment type="subcellular location">
    <subcellularLocation>
        <location evidence="1">Cell inner membrane</location>
        <topology evidence="1">Peripheral membrane protein</topology>
    </subcellularLocation>
</comment>
<comment type="similarity">
    <text evidence="1">Belongs to the purine/pyrimidine phosphoribosyltransferase family. XGPT subfamily.</text>
</comment>
<gene>
    <name evidence="1" type="primary">gpt</name>
    <name type="ordered locus">AHA_3424</name>
</gene>
<sequence length="155" mass="17447">MPKKFYVSWDNLQREARRLARRQLPVSQWKGIIAVSRGGLVPAALMARELGIRNVETLCISSYDHNNQRDLVVVKAATTAGDGEGWLVVEDLVDTGTTAKAIRELYPKAKFIAIFAKPMGEQLLDDFEVAIPQDTWIEQPWDMALEFATPICDEE</sequence>
<name>XGPT_AERHH</name>
<organism>
    <name type="scientific">Aeromonas hydrophila subsp. hydrophila (strain ATCC 7966 / DSM 30187 / BCRC 13018 / CCUG 14551 / JCM 1027 / KCTC 2358 / NCIMB 9240 / NCTC 8049)</name>
    <dbReference type="NCBI Taxonomy" id="380703"/>
    <lineage>
        <taxon>Bacteria</taxon>
        <taxon>Pseudomonadati</taxon>
        <taxon>Pseudomonadota</taxon>
        <taxon>Gammaproteobacteria</taxon>
        <taxon>Aeromonadales</taxon>
        <taxon>Aeromonadaceae</taxon>
        <taxon>Aeromonas</taxon>
    </lineage>
</organism>
<protein>
    <recommendedName>
        <fullName evidence="1">Xanthine-guanine phosphoribosyltransferase</fullName>
        <shortName evidence="1">XGPRT</shortName>
        <ecNumber evidence="1">2.4.2.-</ecNumber>
        <ecNumber evidence="1">2.4.2.22</ecNumber>
    </recommendedName>
    <alternativeName>
        <fullName evidence="1">Xanthine phosphoribosyltransferase</fullName>
    </alternativeName>
</protein>
<feature type="chain" id="PRO_1000070601" description="Xanthine-guanine phosphoribosyltransferase">
    <location>
        <begin position="1"/>
        <end position="155"/>
    </location>
</feature>
<feature type="binding site" evidence="1">
    <location>
        <begin position="37"/>
        <end position="38"/>
    </location>
    <ligand>
        <name>5-phospho-alpha-D-ribose 1-diphosphate</name>
        <dbReference type="ChEBI" id="CHEBI:58017"/>
    </ligand>
</feature>
<feature type="binding site" evidence="1">
    <location>
        <position position="69"/>
    </location>
    <ligand>
        <name>5-phospho-alpha-D-ribose 1-diphosphate</name>
        <dbReference type="ChEBI" id="CHEBI:58017"/>
    </ligand>
</feature>
<feature type="binding site" evidence="1">
    <location>
        <position position="69"/>
    </location>
    <ligand>
        <name>GMP</name>
        <dbReference type="ChEBI" id="CHEBI:58115"/>
    </ligand>
</feature>
<feature type="binding site" evidence="1">
    <location>
        <begin position="90"/>
        <end position="98"/>
    </location>
    <ligand>
        <name>5-phospho-alpha-D-ribose 1-diphosphate</name>
        <dbReference type="ChEBI" id="CHEBI:58017"/>
    </ligand>
</feature>
<feature type="binding site" evidence="1">
    <location>
        <position position="91"/>
    </location>
    <ligand>
        <name>Mg(2+)</name>
        <dbReference type="ChEBI" id="CHEBI:18420"/>
    </ligand>
</feature>
<feature type="binding site" evidence="1">
    <location>
        <begin position="94"/>
        <end position="98"/>
    </location>
    <ligand>
        <name>GMP</name>
        <dbReference type="ChEBI" id="CHEBI:58115"/>
    </ligand>
</feature>
<feature type="binding site" evidence="1">
    <location>
        <position position="94"/>
    </location>
    <ligand>
        <name>guanine</name>
        <dbReference type="ChEBI" id="CHEBI:16235"/>
    </ligand>
</feature>
<feature type="binding site" evidence="1">
    <location>
        <position position="94"/>
    </location>
    <ligand>
        <name>xanthine</name>
        <dbReference type="ChEBI" id="CHEBI:17712"/>
    </ligand>
</feature>
<feature type="binding site" evidence="1">
    <location>
        <begin position="136"/>
        <end position="137"/>
    </location>
    <ligand>
        <name>GMP</name>
        <dbReference type="ChEBI" id="CHEBI:58115"/>
    </ligand>
</feature>
<feature type="binding site" evidence="1">
    <location>
        <position position="137"/>
    </location>
    <ligand>
        <name>guanine</name>
        <dbReference type="ChEBI" id="CHEBI:16235"/>
    </ligand>
</feature>
<feature type="binding site" evidence="1">
    <location>
        <position position="137"/>
    </location>
    <ligand>
        <name>xanthine</name>
        <dbReference type="ChEBI" id="CHEBI:17712"/>
    </ligand>
</feature>
<proteinExistence type="inferred from homology"/>
<keyword id="KW-0997">Cell inner membrane</keyword>
<keyword id="KW-1003">Cell membrane</keyword>
<keyword id="KW-0328">Glycosyltransferase</keyword>
<keyword id="KW-0460">Magnesium</keyword>
<keyword id="KW-0472">Membrane</keyword>
<keyword id="KW-0479">Metal-binding</keyword>
<keyword id="KW-0660">Purine salvage</keyword>
<keyword id="KW-1185">Reference proteome</keyword>
<keyword id="KW-0808">Transferase</keyword>